<gene>
    <name evidence="1" type="primary">leuA</name>
    <name type="ordered locus">DSY4310</name>
</gene>
<sequence length="557" mass="62708">MKNVDNYRRGYFMPPVKSLKWAEKEYITTPPTWCSVDLRDGNQALVVPMSLEEKLEYYHMLLKIGFKEIEVGFPAASETEYAFLRTLIEQNLIPEDVTIQVLTQSRDHIIEKTFKALVGVKKAVVHLYNSTSVAQREQVFKMSREEIVEIAVSGARLLKKYAAETEGNFQFEYSPESFTGTEMEFALEICNQVLDVFEPTPENKVIINLPATVSLSMPHVYASQIEYMSEHLKYRDNVILSLHPHNDRGTAVADAELGLLAGGQRIEGTLFGNGERTGNVDIVTLALNLFSHGVDPGLNFASMLEITAKYEALTRMKVHDRQPYGGKLVFAAFSGSHQDAITKGIKWREEHECHYWNVPYLLIDPQDIGREYEGDVIRINSQSGKGGIAYMLEQHYALDLPAKMREAFGYKVKNVSDNLHKELMPEEIKDIFFKEYVNIENPIKFLNFHFLNHDDFQTTVTLEFKGEIQELSGEGDGRLDAISNALQARLGLSYSNLIYKEHALELGSKSQAVSYVGVTGPDGVIHWGCGIHTDIFTSSVKALISAINTMIKDSAAV</sequence>
<organism>
    <name type="scientific">Desulfitobacterium hafniense (strain Y51)</name>
    <dbReference type="NCBI Taxonomy" id="138119"/>
    <lineage>
        <taxon>Bacteria</taxon>
        <taxon>Bacillati</taxon>
        <taxon>Bacillota</taxon>
        <taxon>Clostridia</taxon>
        <taxon>Eubacteriales</taxon>
        <taxon>Desulfitobacteriaceae</taxon>
        <taxon>Desulfitobacterium</taxon>
    </lineage>
</organism>
<keyword id="KW-0028">Amino-acid biosynthesis</keyword>
<keyword id="KW-0100">Branched-chain amino acid biosynthesis</keyword>
<keyword id="KW-0963">Cytoplasm</keyword>
<keyword id="KW-0432">Leucine biosynthesis</keyword>
<keyword id="KW-0460">Magnesium</keyword>
<keyword id="KW-0479">Metal-binding</keyword>
<keyword id="KW-1185">Reference proteome</keyword>
<keyword id="KW-0808">Transferase</keyword>
<feature type="chain" id="PRO_0000406874" description="2-isopropylmalate synthase">
    <location>
        <begin position="1"/>
        <end position="557"/>
    </location>
</feature>
<feature type="domain" description="Pyruvate carboxyltransferase" evidence="1">
    <location>
        <begin position="31"/>
        <end position="304"/>
    </location>
</feature>
<feature type="region of interest" description="Regulatory domain" evidence="1">
    <location>
        <begin position="439"/>
        <end position="557"/>
    </location>
</feature>
<feature type="binding site" evidence="1">
    <location>
        <position position="40"/>
    </location>
    <ligand>
        <name>Mg(2+)</name>
        <dbReference type="ChEBI" id="CHEBI:18420"/>
    </ligand>
</feature>
<feature type="binding site" evidence="1">
    <location>
        <position position="243"/>
    </location>
    <ligand>
        <name>Mg(2+)</name>
        <dbReference type="ChEBI" id="CHEBI:18420"/>
    </ligand>
</feature>
<feature type="binding site" evidence="1">
    <location>
        <position position="245"/>
    </location>
    <ligand>
        <name>Mg(2+)</name>
        <dbReference type="ChEBI" id="CHEBI:18420"/>
    </ligand>
</feature>
<feature type="binding site" evidence="1">
    <location>
        <position position="279"/>
    </location>
    <ligand>
        <name>Mg(2+)</name>
        <dbReference type="ChEBI" id="CHEBI:18420"/>
    </ligand>
</feature>
<evidence type="ECO:0000255" key="1">
    <source>
        <dbReference type="HAMAP-Rule" id="MF_00572"/>
    </source>
</evidence>
<reference key="1">
    <citation type="journal article" date="2006" name="J. Bacteriol.">
        <title>Complete genome sequence of the dehalorespiring bacterium Desulfitobacterium hafniense Y51 and comparison with Dehalococcoides ethenogenes 195.</title>
        <authorList>
            <person name="Nonaka H."/>
            <person name="Keresztes G."/>
            <person name="Shinoda Y."/>
            <person name="Ikenaga Y."/>
            <person name="Abe M."/>
            <person name="Naito K."/>
            <person name="Inatomi K."/>
            <person name="Furukawa K."/>
            <person name="Inui M."/>
            <person name="Yukawa H."/>
        </authorList>
    </citation>
    <scope>NUCLEOTIDE SEQUENCE [LARGE SCALE GENOMIC DNA]</scope>
    <source>
        <strain>Y51</strain>
    </source>
</reference>
<proteinExistence type="inferred from homology"/>
<accession>Q24PE3</accession>
<comment type="function">
    <text evidence="1">Catalyzes the condensation of the acetyl group of acetyl-CoA with 3-methyl-2-oxobutanoate (2-ketoisovalerate) to form 3-carboxy-3-hydroxy-4-methylpentanoate (2-isopropylmalate).</text>
</comment>
<comment type="catalytic activity">
    <reaction evidence="1">
        <text>3-methyl-2-oxobutanoate + acetyl-CoA + H2O = (2S)-2-isopropylmalate + CoA + H(+)</text>
        <dbReference type="Rhea" id="RHEA:21524"/>
        <dbReference type="ChEBI" id="CHEBI:1178"/>
        <dbReference type="ChEBI" id="CHEBI:11851"/>
        <dbReference type="ChEBI" id="CHEBI:15377"/>
        <dbReference type="ChEBI" id="CHEBI:15378"/>
        <dbReference type="ChEBI" id="CHEBI:57287"/>
        <dbReference type="ChEBI" id="CHEBI:57288"/>
        <dbReference type="EC" id="2.3.3.13"/>
    </reaction>
</comment>
<comment type="cofactor">
    <cofactor evidence="1">
        <name>Mg(2+)</name>
        <dbReference type="ChEBI" id="CHEBI:18420"/>
    </cofactor>
</comment>
<comment type="pathway">
    <text evidence="1">Amino-acid biosynthesis; L-leucine biosynthesis; L-leucine from 3-methyl-2-oxobutanoate: step 1/4.</text>
</comment>
<comment type="subunit">
    <text evidence="1">Homodimer.</text>
</comment>
<comment type="subcellular location">
    <subcellularLocation>
        <location evidence="1">Cytoplasm</location>
    </subcellularLocation>
</comment>
<comment type="similarity">
    <text evidence="1">Belongs to the alpha-IPM synthase/homocitrate synthase family. LeuA type 2 subfamily.</text>
</comment>
<dbReference type="EC" id="2.3.3.13" evidence="1"/>
<dbReference type="EMBL" id="AP008230">
    <property type="protein sequence ID" value="BAE86099.1"/>
    <property type="molecule type" value="Genomic_DNA"/>
</dbReference>
<dbReference type="RefSeq" id="WP_011461751.1">
    <property type="nucleotide sequence ID" value="NC_007907.1"/>
</dbReference>
<dbReference type="SMR" id="Q24PE3"/>
<dbReference type="STRING" id="138119.DSY4310"/>
<dbReference type="KEGG" id="dsy:DSY4310"/>
<dbReference type="eggNOG" id="COG0119">
    <property type="taxonomic scope" value="Bacteria"/>
</dbReference>
<dbReference type="HOGENOM" id="CLU_004588_3_2_9"/>
<dbReference type="UniPathway" id="UPA00048">
    <property type="reaction ID" value="UER00070"/>
</dbReference>
<dbReference type="Proteomes" id="UP000001946">
    <property type="component" value="Chromosome"/>
</dbReference>
<dbReference type="GO" id="GO:0005737">
    <property type="term" value="C:cytoplasm"/>
    <property type="evidence" value="ECO:0007669"/>
    <property type="project" value="UniProtKB-SubCell"/>
</dbReference>
<dbReference type="GO" id="GO:0003852">
    <property type="term" value="F:2-isopropylmalate synthase activity"/>
    <property type="evidence" value="ECO:0007669"/>
    <property type="project" value="UniProtKB-UniRule"/>
</dbReference>
<dbReference type="GO" id="GO:0003985">
    <property type="term" value="F:acetyl-CoA C-acetyltransferase activity"/>
    <property type="evidence" value="ECO:0007669"/>
    <property type="project" value="UniProtKB-UniRule"/>
</dbReference>
<dbReference type="GO" id="GO:0000287">
    <property type="term" value="F:magnesium ion binding"/>
    <property type="evidence" value="ECO:0007669"/>
    <property type="project" value="UniProtKB-UniRule"/>
</dbReference>
<dbReference type="GO" id="GO:0009098">
    <property type="term" value="P:L-leucine biosynthetic process"/>
    <property type="evidence" value="ECO:0007669"/>
    <property type="project" value="UniProtKB-UniRule"/>
</dbReference>
<dbReference type="CDD" id="cd07942">
    <property type="entry name" value="DRE_TIM_LeuA"/>
    <property type="match status" value="1"/>
</dbReference>
<dbReference type="Gene3D" id="3.30.160.270">
    <property type="match status" value="1"/>
</dbReference>
<dbReference type="Gene3D" id="3.20.20.70">
    <property type="entry name" value="Aldolase class I"/>
    <property type="match status" value="1"/>
</dbReference>
<dbReference type="HAMAP" id="MF_00572">
    <property type="entry name" value="LeuA_type2"/>
    <property type="match status" value="1"/>
</dbReference>
<dbReference type="InterPro" id="IPR013709">
    <property type="entry name" value="2-isopropylmalate_synth_dimer"/>
</dbReference>
<dbReference type="InterPro" id="IPR002034">
    <property type="entry name" value="AIPM/Hcit_synth_CS"/>
</dbReference>
<dbReference type="InterPro" id="IPR013785">
    <property type="entry name" value="Aldolase_TIM"/>
</dbReference>
<dbReference type="InterPro" id="IPR005668">
    <property type="entry name" value="IPM_Synthase"/>
</dbReference>
<dbReference type="InterPro" id="IPR054692">
    <property type="entry name" value="LeuA-like_post-cat"/>
</dbReference>
<dbReference type="InterPro" id="IPR036230">
    <property type="entry name" value="LeuA_allosteric_dom_sf"/>
</dbReference>
<dbReference type="InterPro" id="IPR039371">
    <property type="entry name" value="LeuA_N_DRE-TIM"/>
</dbReference>
<dbReference type="InterPro" id="IPR000891">
    <property type="entry name" value="PYR_CT"/>
</dbReference>
<dbReference type="NCBIfam" id="NF002991">
    <property type="entry name" value="PRK03739.1"/>
    <property type="match status" value="1"/>
</dbReference>
<dbReference type="PANTHER" id="PTHR46911">
    <property type="match status" value="1"/>
</dbReference>
<dbReference type="PANTHER" id="PTHR46911:SF1">
    <property type="entry name" value="2-ISOPROPYLMALATE SYNTHASE"/>
    <property type="match status" value="1"/>
</dbReference>
<dbReference type="Pfam" id="PF00682">
    <property type="entry name" value="HMGL-like"/>
    <property type="match status" value="1"/>
</dbReference>
<dbReference type="Pfam" id="PF22615">
    <property type="entry name" value="IPMS_D2"/>
    <property type="match status" value="1"/>
</dbReference>
<dbReference type="Pfam" id="PF08502">
    <property type="entry name" value="LeuA_dimer"/>
    <property type="match status" value="1"/>
</dbReference>
<dbReference type="SMART" id="SM00917">
    <property type="entry name" value="LeuA_dimer"/>
    <property type="match status" value="1"/>
</dbReference>
<dbReference type="SUPFAM" id="SSF110921">
    <property type="entry name" value="2-isopropylmalate synthase LeuA, allosteric (dimerisation) domain"/>
    <property type="match status" value="1"/>
</dbReference>
<dbReference type="SUPFAM" id="SSF51569">
    <property type="entry name" value="Aldolase"/>
    <property type="match status" value="1"/>
</dbReference>
<dbReference type="SUPFAM" id="SSF89000">
    <property type="entry name" value="post-HMGL domain-like"/>
    <property type="match status" value="1"/>
</dbReference>
<dbReference type="PROSITE" id="PS00815">
    <property type="entry name" value="AIPM_HOMOCIT_SYNTH_1"/>
    <property type="match status" value="1"/>
</dbReference>
<dbReference type="PROSITE" id="PS00816">
    <property type="entry name" value="AIPM_HOMOCIT_SYNTH_2"/>
    <property type="match status" value="1"/>
</dbReference>
<dbReference type="PROSITE" id="PS50991">
    <property type="entry name" value="PYR_CT"/>
    <property type="match status" value="1"/>
</dbReference>
<name>LEU1_DESHY</name>
<protein>
    <recommendedName>
        <fullName evidence="1">2-isopropylmalate synthase</fullName>
        <ecNumber evidence="1">2.3.3.13</ecNumber>
    </recommendedName>
    <alternativeName>
        <fullName evidence="1">Alpha-IPM synthase</fullName>
    </alternativeName>
    <alternativeName>
        <fullName evidence="1">Alpha-isopropylmalate synthase</fullName>
    </alternativeName>
</protein>